<name>YAAA_SALCH</name>
<organism>
    <name type="scientific">Salmonella choleraesuis (strain SC-B67)</name>
    <dbReference type="NCBI Taxonomy" id="321314"/>
    <lineage>
        <taxon>Bacteria</taxon>
        <taxon>Pseudomonadati</taxon>
        <taxon>Pseudomonadota</taxon>
        <taxon>Gammaproteobacteria</taxon>
        <taxon>Enterobacterales</taxon>
        <taxon>Enterobacteriaceae</taxon>
        <taxon>Salmonella</taxon>
    </lineage>
</organism>
<reference key="1">
    <citation type="journal article" date="2005" name="Nucleic Acids Res.">
        <title>The genome sequence of Salmonella enterica serovar Choleraesuis, a highly invasive and resistant zoonotic pathogen.</title>
        <authorList>
            <person name="Chiu C.-H."/>
            <person name="Tang P."/>
            <person name="Chu C."/>
            <person name="Hu S."/>
            <person name="Bao Q."/>
            <person name="Yu J."/>
            <person name="Chou Y.-Y."/>
            <person name="Wang H.-S."/>
            <person name="Lee Y.-S."/>
        </authorList>
    </citation>
    <scope>NUCLEOTIDE SEQUENCE [LARGE SCALE GENOMIC DNA]</scope>
    <source>
        <strain>SC-B67</strain>
    </source>
</reference>
<proteinExistence type="inferred from homology"/>
<evidence type="ECO:0000255" key="1">
    <source>
        <dbReference type="HAMAP-Rule" id="MF_00652"/>
    </source>
</evidence>
<feature type="chain" id="PRO_0000262054" description="UPF0246 protein YaaA">
    <location>
        <begin position="1"/>
        <end position="257"/>
    </location>
</feature>
<protein>
    <recommendedName>
        <fullName evidence="1">UPF0246 protein YaaA</fullName>
    </recommendedName>
</protein>
<dbReference type="EMBL" id="AE017220">
    <property type="protein sequence ID" value="AAX63911.1"/>
    <property type="molecule type" value="Genomic_DNA"/>
</dbReference>
<dbReference type="RefSeq" id="WP_000906175.1">
    <property type="nucleotide sequence ID" value="NC_006905.1"/>
</dbReference>
<dbReference type="SMR" id="Q57TQ0"/>
<dbReference type="KEGG" id="sec:SCH_0005"/>
<dbReference type="HOGENOM" id="CLU_061989_0_0_6"/>
<dbReference type="Proteomes" id="UP000000538">
    <property type="component" value="Chromosome"/>
</dbReference>
<dbReference type="GO" id="GO:0005829">
    <property type="term" value="C:cytosol"/>
    <property type="evidence" value="ECO:0007669"/>
    <property type="project" value="TreeGrafter"/>
</dbReference>
<dbReference type="GO" id="GO:0033194">
    <property type="term" value="P:response to hydroperoxide"/>
    <property type="evidence" value="ECO:0007669"/>
    <property type="project" value="TreeGrafter"/>
</dbReference>
<dbReference type="HAMAP" id="MF_00652">
    <property type="entry name" value="UPF0246"/>
    <property type="match status" value="1"/>
</dbReference>
<dbReference type="InterPro" id="IPR005583">
    <property type="entry name" value="YaaA"/>
</dbReference>
<dbReference type="NCBIfam" id="NF002541">
    <property type="entry name" value="PRK02101.1-1"/>
    <property type="match status" value="1"/>
</dbReference>
<dbReference type="NCBIfam" id="NF002542">
    <property type="entry name" value="PRK02101.1-3"/>
    <property type="match status" value="1"/>
</dbReference>
<dbReference type="PANTHER" id="PTHR30283:SF4">
    <property type="entry name" value="PEROXIDE STRESS RESISTANCE PROTEIN YAAA"/>
    <property type="match status" value="1"/>
</dbReference>
<dbReference type="PANTHER" id="PTHR30283">
    <property type="entry name" value="PEROXIDE STRESS RESPONSE PROTEIN YAAA"/>
    <property type="match status" value="1"/>
</dbReference>
<dbReference type="Pfam" id="PF03883">
    <property type="entry name" value="H2O2_YaaD"/>
    <property type="match status" value="1"/>
</dbReference>
<comment type="similarity">
    <text evidence="1">Belongs to the UPF0246 family.</text>
</comment>
<gene>
    <name evidence="1" type="primary">yaaA</name>
    <name type="ordered locus">SCH_0005</name>
</gene>
<sequence length="257" mass="29764">MLILISPAKTLDYQSPLATTRYTQPELLDHSQQLIQQARQLSAPQISRLMGISDKLADLNATRFHDWQPHFTPDNARQAILAFKGDVYTGLQAETFNDADFDFAQQHLRMLSGLYGVLRPLDLMQPYRLEMGIRLENPRGKDLYQFWGDIITDKLNEALEAQGDRVVVNLASEEYFKSVKPKKLNAELIKPVFLDEKNGKFKVVSFYAKKARGLMSRFIIENRLTKPEQLTAFDREGYFFDEETSTQDELVFKRYEQ</sequence>
<accession>Q57TQ0</accession>